<reference key="1">
    <citation type="journal article" date="1998" name="Circ. Res.">
        <title>Cloning and functional expression of a novel cardiac two-pore background K+ channel (cTBAK-1).</title>
        <authorList>
            <person name="Kim D."/>
            <person name="Fujita A."/>
            <person name="Horio Y."/>
            <person name="Kurachi Y."/>
        </authorList>
    </citation>
    <scope>NUCLEOTIDE SEQUENCE [MRNA]</scope>
    <scope>FUNCTION</scope>
    <scope>TRANSPORTER ACTIVITY</scope>
    <scope>TISSUE SPECIFICITY</scope>
    <scope>ACTIVITY REGULATION</scope>
    <source>
        <tissue>Heart</tissue>
    </source>
</reference>
<reference key="2">
    <citation type="journal article" date="2000" name="J. Biol. Chem.">
        <title>Proton block and voltage gating are potassium-dependent in the cardiac leak channel Kcnk3.</title>
        <authorList>
            <person name="Lopes C.M.B."/>
            <person name="Gallagher P.G."/>
            <person name="Buck M.E."/>
            <person name="Butler M.H."/>
            <person name="Goldstein S.A.N."/>
        </authorList>
    </citation>
    <scope>NUCLEOTIDE SEQUENCE [GENOMIC DNA]</scope>
    <source>
        <tissue>Heart</tissue>
    </source>
</reference>
<reference key="3">
    <citation type="journal article" date="1997" name="EMBO J.">
        <title>TASK, a human background K+ channel to sense external pH variations near physiological pH.</title>
        <authorList>
            <person name="Duprat F."/>
            <person name="Lesage F."/>
            <person name="Fink M."/>
            <person name="Reyes R."/>
            <person name="Heurteaux C."/>
            <person name="Lazdunski M."/>
        </authorList>
    </citation>
    <scope>NUCLEOTIDE SEQUENCE [MRNA] OF 4-409</scope>
</reference>
<reference key="4">
    <citation type="journal article" date="2003" name="Pflugers Arch.">
        <title>Determinants of pH sensing in the two-pore domain K(+) channels TASK-1 and -2.</title>
        <authorList>
            <person name="Morton M.J."/>
            <person name="O'Connell A.D."/>
            <person name="Sivaprasadarao A."/>
            <person name="Hunter M."/>
        </authorList>
    </citation>
    <scope>FUNCTION</scope>
    <scope>TRANSPORTER ACTIVITY</scope>
    <scope>ACTIVITY REGULATION</scope>
    <scope>MUTAGENESIS OF HIS-72; LYS-73; HIS-98 AND LYS-210</scope>
    <scope>SITE</scope>
</reference>
<reference key="5">
    <citation type="journal article" date="2007" name="J. Neurosci.">
        <title>TASK-3 two-pore domain potassium channels enable sustained high-frequency firing in cerebellar granule neurons.</title>
        <authorList>
            <person name="Brickley S.G."/>
            <person name="Aller M.I."/>
            <person name="Sandu C."/>
            <person name="Veale E.L."/>
            <person name="Alder F.G."/>
            <person name="Sambi H."/>
            <person name="Mathie A."/>
            <person name="Wisden W."/>
        </authorList>
    </citation>
    <scope>FUNCTION</scope>
</reference>
<reference key="6">
    <citation type="journal article" date="2007" name="J. Neurosci.">
        <title>TASK channels determine pH sensitivity in select respiratory neurons but do not contribute to central respiratory chemosensitivity.</title>
        <authorList>
            <person name="Mulkey D.K."/>
            <person name="Talley E.M."/>
            <person name="Stornetta R.L."/>
            <person name="Siegel A.R."/>
            <person name="West G.H."/>
            <person name="Chen X."/>
            <person name="Sen N."/>
            <person name="Mistry A.M."/>
            <person name="Guyenet P.G."/>
            <person name="Bayliss D.A."/>
        </authorList>
    </citation>
    <scope>FUNCTION</scope>
</reference>
<reference key="7">
    <citation type="journal article" date="2008" name="EMBO J.">
        <title>Invalidation of TASK1 potassium channels disrupts adrenal gland zonation and mineralocorticoid homeostasis.</title>
        <authorList>
            <person name="Heitzmann D."/>
            <person name="Derand R."/>
            <person name="Jungbauer S."/>
            <person name="Bandulik S."/>
            <person name="Sterner C."/>
            <person name="Schweda F."/>
            <person name="El Wakil A."/>
            <person name="Lalli E."/>
            <person name="Guy N."/>
            <person name="Mengual R."/>
            <person name="Reichold M."/>
            <person name="Tegtmeier I."/>
            <person name="Bendahhou S."/>
            <person name="Gomez-Sanchez C.E."/>
            <person name="Aller M.I."/>
            <person name="Wisden W."/>
            <person name="Weber A."/>
            <person name="Lesage F."/>
            <person name="Warth R."/>
            <person name="Barhanin J."/>
        </authorList>
    </citation>
    <scope>FUNCTION</scope>
    <scope>TISSUE SPECIFICITY</scope>
    <scope>DISRUPTION PHENOTYPE</scope>
</reference>
<reference key="8">
    <citation type="journal article" date="2008" name="J. Neurosci.">
        <title>A role for TASK-1 (KCNK3) channels in the chemosensory control of breathing.</title>
        <authorList>
            <person name="Trapp S."/>
            <person name="Aller M.I."/>
            <person name="Wisden W."/>
            <person name="Gourine A.V."/>
        </authorList>
    </citation>
    <scope>FUNCTION</scope>
</reference>
<reference key="9">
    <citation type="journal article" date="2008" name="Proc. Natl. Acad. Sci. U.S.A.">
        <title>TASK channel deletion in mice causes primary hyperaldosteronism.</title>
        <authorList>
            <person name="Davies L.A."/>
            <person name="Hu C."/>
            <person name="Guagliardo N.A."/>
            <person name="Sen N."/>
            <person name="Chen X."/>
            <person name="Talley E.M."/>
            <person name="Carey R.M."/>
            <person name="Bayliss D.A."/>
            <person name="Barrett P.Q."/>
        </authorList>
    </citation>
    <scope>FUNCTION</scope>
    <scope>DISRUPTION PHENOTYPE</scope>
</reference>
<reference key="10">
    <citation type="journal article" date="2010" name="Cell">
        <title>A tissue-specific atlas of mouse protein phosphorylation and expression.</title>
        <authorList>
            <person name="Huttlin E.L."/>
            <person name="Jedrychowski M.P."/>
            <person name="Elias J.E."/>
            <person name="Goswami T."/>
            <person name="Rad R."/>
            <person name="Beausoleil S.A."/>
            <person name="Villen J."/>
            <person name="Haas W."/>
            <person name="Sowa M.E."/>
            <person name="Gygi S.P."/>
        </authorList>
    </citation>
    <scope>IDENTIFICATION BY MASS SPECTROMETRY [LARGE SCALE ANALYSIS]</scope>
    <source>
        <tissue>Brown adipose tissue</tissue>
    </source>
</reference>
<reference key="11">
    <citation type="journal article" date="2017" name="Cell">
        <title>Crosstalk between KCNK3-Mediated Ion Current and Adrenergic Signaling Regulates Adipose Thermogenesis and Obesity.</title>
        <authorList>
            <person name="Chen Y."/>
            <person name="Zeng X."/>
            <person name="Huang X."/>
            <person name="Serag S."/>
            <person name="Woolf C.J."/>
            <person name="Spiegelman B.M."/>
        </authorList>
    </citation>
    <scope>FUNCTION</scope>
    <scope>TRANSPORTER ACTIVITY</scope>
    <scope>TISSUE SPECIFICITY</scope>
    <scope>INDUCTION</scope>
</reference>
<sequence length="409" mass="45068">MKRQNVRTLALIVCTFTYLLVGAAVFDALESEPEMIERQRLELRQLELRARYNLSEGGYEELERVVLRLKPHKAGVQWRFAGSFYFAITVITTIGYGHAAPSTDGGKVFCMFYALLGIPLTLVMFQSLGERINTFVRYLLHRAKRGLGMRHAEVSMANMVLIGFVSCISTLCIGAAAFSYYERWTFFQAYYYCFITLTTIGFGDYVALQKDQALQTQPQYVAFSFVYILTGLTVIGAFLNLVVLRFMTMNAEDEKRDAEHRALLTHNGQAVGLGGLSCLSGSLGDGVRPRDPVTCAAAAGGVGVGVGGSGFRNVYAEVLHFQSMCSCLWYKSREKLQYSIPMIIPRDLSTSDTCVEHSHSSPGGGGRYSDTPSHPCLCSGTQRSAISSVSTGLHSLAAFRGLMKRRSSV</sequence>
<name>KCNK3_MOUSE</name>
<evidence type="ECO:0000250" key="1">
    <source>
        <dbReference type="UniProtKB" id="O14649"/>
    </source>
</evidence>
<evidence type="ECO:0000250" key="2">
    <source>
        <dbReference type="UniProtKB" id="O54912"/>
    </source>
</evidence>
<evidence type="ECO:0000255" key="3"/>
<evidence type="ECO:0000269" key="4">
    <source>
    </source>
</evidence>
<evidence type="ECO:0000269" key="5">
    <source>
    </source>
</evidence>
<evidence type="ECO:0000269" key="6">
    <source>
    </source>
</evidence>
<evidence type="ECO:0000269" key="7">
    <source>
    </source>
</evidence>
<evidence type="ECO:0000269" key="8">
    <source>
    </source>
</evidence>
<evidence type="ECO:0000269" key="9">
    <source>
    </source>
</evidence>
<evidence type="ECO:0000269" key="10">
    <source>
    </source>
</evidence>
<evidence type="ECO:0000303" key="11">
    <source>
    </source>
</evidence>
<evidence type="ECO:0000303" key="12">
    <source>
    </source>
</evidence>
<evidence type="ECO:0000303" key="13">
    <source>
    </source>
</evidence>
<evidence type="ECO:0000305" key="14"/>
<evidence type="ECO:0000305" key="15">
    <source>
    </source>
</evidence>
<evidence type="ECO:0000312" key="16">
    <source>
        <dbReference type="MGI" id="MGI:1100509"/>
    </source>
</evidence>
<protein>
    <recommendedName>
        <fullName>Potassium channel subfamily K member 3</fullName>
    </recommendedName>
    <alternativeName>
        <fullName>Acid-sensitive potassium channel protein TASK-1</fullName>
    </alternativeName>
    <alternativeName>
        <fullName>Cardiac two pore background K(+) channel</fullName>
    </alternativeName>
    <alternativeName>
        <fullName>TWIK-related acid-sensitive K(+) channel 1</fullName>
    </alternativeName>
    <alternativeName>
        <fullName>Two pore potassium channel KT3.1</fullName>
        <shortName>Two pore K(+) channel KT3.1</shortName>
    </alternativeName>
    <alternativeName>
        <fullName evidence="13">cTBAK-1</fullName>
    </alternativeName>
</protein>
<organism>
    <name type="scientific">Mus musculus</name>
    <name type="common">Mouse</name>
    <dbReference type="NCBI Taxonomy" id="10090"/>
    <lineage>
        <taxon>Eukaryota</taxon>
        <taxon>Metazoa</taxon>
        <taxon>Chordata</taxon>
        <taxon>Craniata</taxon>
        <taxon>Vertebrata</taxon>
        <taxon>Euteleostomi</taxon>
        <taxon>Mammalia</taxon>
        <taxon>Eutheria</taxon>
        <taxon>Euarchontoglires</taxon>
        <taxon>Glires</taxon>
        <taxon>Rodentia</taxon>
        <taxon>Myomorpha</taxon>
        <taxon>Muroidea</taxon>
        <taxon>Muridae</taxon>
        <taxon>Murinae</taxon>
        <taxon>Mus</taxon>
        <taxon>Mus</taxon>
    </lineage>
</organism>
<gene>
    <name evidence="11 16" type="primary">Kcnk3</name>
    <name type="synonym">Ctbak</name>
    <name type="synonym">Task</name>
    <name evidence="12" type="synonym">Task1</name>
</gene>
<keyword id="KW-1003">Cell membrane</keyword>
<keyword id="KW-0325">Glycoprotein</keyword>
<keyword id="KW-0407">Ion channel</keyword>
<keyword id="KW-0406">Ion transport</keyword>
<keyword id="KW-0472">Membrane</keyword>
<keyword id="KW-0630">Potassium</keyword>
<keyword id="KW-0631">Potassium channel</keyword>
<keyword id="KW-0633">Potassium transport</keyword>
<keyword id="KW-1185">Reference proteome</keyword>
<keyword id="KW-0915">Sodium</keyword>
<keyword id="KW-0894">Sodium channel</keyword>
<keyword id="KW-0739">Sodium transport</keyword>
<keyword id="KW-0812">Transmembrane</keyword>
<keyword id="KW-1133">Transmembrane helix</keyword>
<keyword id="KW-0813">Transport</keyword>
<accession>O35111</accession>
<accession>O35163</accession>
<dbReference type="EMBL" id="AB008537">
    <property type="protein sequence ID" value="BAA25436.1"/>
    <property type="molecule type" value="mRNA"/>
</dbReference>
<dbReference type="EMBL" id="AF241798">
    <property type="protein sequence ID" value="AAF81418.1"/>
    <property type="molecule type" value="Genomic_DNA"/>
</dbReference>
<dbReference type="EMBL" id="AF242508">
    <property type="protein sequence ID" value="AAF81418.1"/>
    <property type="status" value="JOINED"/>
    <property type="molecule type" value="Genomic_DNA"/>
</dbReference>
<dbReference type="EMBL" id="AF065162">
    <property type="protein sequence ID" value="AAG29339.1"/>
    <property type="molecule type" value="mRNA"/>
</dbReference>
<dbReference type="EMBL" id="AF006824">
    <property type="protein sequence ID" value="AAC53367.1"/>
    <property type="molecule type" value="mRNA"/>
</dbReference>
<dbReference type="EMBL" id="AB013345">
    <property type="protein sequence ID" value="BAA28349.1"/>
    <property type="molecule type" value="mRNA"/>
</dbReference>
<dbReference type="CCDS" id="CCDS19160.1"/>
<dbReference type="RefSeq" id="NP_034738.1">
    <property type="nucleotide sequence ID" value="NM_010608.3"/>
</dbReference>
<dbReference type="SMR" id="O35111"/>
<dbReference type="BioGRID" id="200909">
    <property type="interactions" value="1"/>
</dbReference>
<dbReference type="FunCoup" id="O35111">
    <property type="interactions" value="287"/>
</dbReference>
<dbReference type="STRING" id="10090.ENSMUSP00000098987"/>
<dbReference type="GlyCosmos" id="O35111">
    <property type="glycosylation" value="1 site, No reported glycans"/>
</dbReference>
<dbReference type="GlyGen" id="O35111">
    <property type="glycosylation" value="1 site, 1 N-linked glycan (1 site)"/>
</dbReference>
<dbReference type="iPTMnet" id="O35111"/>
<dbReference type="PhosphoSitePlus" id="O35111"/>
<dbReference type="PaxDb" id="10090-ENSMUSP00000098987"/>
<dbReference type="PeptideAtlas" id="O35111"/>
<dbReference type="ProteomicsDB" id="269270"/>
<dbReference type="ABCD" id="O35111">
    <property type="antibodies" value="1 sequenced antibody"/>
</dbReference>
<dbReference type="Antibodypedia" id="13387">
    <property type="antibodies" value="233 antibodies from 28 providers"/>
</dbReference>
<dbReference type="DNASU" id="16527"/>
<dbReference type="Ensembl" id="ENSMUST00000066295.5">
    <property type="protein sequence ID" value="ENSMUSP00000098987.2"/>
    <property type="gene ID" value="ENSMUSG00000049265.9"/>
</dbReference>
<dbReference type="GeneID" id="16527"/>
<dbReference type="KEGG" id="mmu:16527"/>
<dbReference type="UCSC" id="uc008wvr.1">
    <property type="organism name" value="mouse"/>
</dbReference>
<dbReference type="AGR" id="MGI:1100509"/>
<dbReference type="CTD" id="3777"/>
<dbReference type="MGI" id="MGI:1100509">
    <property type="gene designation" value="Kcnk3"/>
</dbReference>
<dbReference type="VEuPathDB" id="HostDB:ENSMUSG00000049265"/>
<dbReference type="eggNOG" id="KOG4404">
    <property type="taxonomic scope" value="Eukaryota"/>
</dbReference>
<dbReference type="GeneTree" id="ENSGT00940000158248"/>
<dbReference type="HOGENOM" id="CLU_022504_4_0_1"/>
<dbReference type="InParanoid" id="O35111"/>
<dbReference type="OMA" id="LSEANYC"/>
<dbReference type="OrthoDB" id="297496at2759"/>
<dbReference type="PhylomeDB" id="O35111"/>
<dbReference type="TreeFam" id="TF313947"/>
<dbReference type="Reactome" id="R-MMU-1299316">
    <property type="pathway name" value="TWIK-releated acid-sensitive K+ channel (TASK)"/>
</dbReference>
<dbReference type="Reactome" id="R-MMU-5576886">
    <property type="pathway name" value="Phase 4 - resting membrane potential"/>
</dbReference>
<dbReference type="BioGRID-ORCS" id="16527">
    <property type="hits" value="2 hits in 78 CRISPR screens"/>
</dbReference>
<dbReference type="ChiTaRS" id="Kcnk3">
    <property type="organism name" value="mouse"/>
</dbReference>
<dbReference type="PRO" id="PR:O35111"/>
<dbReference type="Proteomes" id="UP000000589">
    <property type="component" value="Chromosome 5"/>
</dbReference>
<dbReference type="RNAct" id="O35111">
    <property type="molecule type" value="protein"/>
</dbReference>
<dbReference type="Bgee" id="ENSMUSG00000049265">
    <property type="expression patterns" value="Expressed in adrenal gland and 146 other cell types or tissues"/>
</dbReference>
<dbReference type="GO" id="GO:0005886">
    <property type="term" value="C:plasma membrane"/>
    <property type="evidence" value="ECO:0007669"/>
    <property type="project" value="UniProtKB-SubCell"/>
</dbReference>
<dbReference type="GO" id="GO:0005252">
    <property type="term" value="F:open rectifier potassium channel activity"/>
    <property type="evidence" value="ECO:0007669"/>
    <property type="project" value="Ensembl"/>
</dbReference>
<dbReference type="GO" id="GO:0015271">
    <property type="term" value="F:outward rectifier potassium channel activity"/>
    <property type="evidence" value="ECO:0000250"/>
    <property type="project" value="UniProtKB"/>
</dbReference>
<dbReference type="GO" id="GO:0022841">
    <property type="term" value="F:potassium ion leak channel activity"/>
    <property type="evidence" value="ECO:0000250"/>
    <property type="project" value="UniProtKB"/>
</dbReference>
<dbReference type="GO" id="GO:0046982">
    <property type="term" value="F:protein heterodimerization activity"/>
    <property type="evidence" value="ECO:0007669"/>
    <property type="project" value="Ensembl"/>
</dbReference>
<dbReference type="GO" id="GO:0044548">
    <property type="term" value="F:S100 protein binding"/>
    <property type="evidence" value="ECO:0007669"/>
    <property type="project" value="Ensembl"/>
</dbReference>
<dbReference type="GO" id="GO:0005272">
    <property type="term" value="F:sodium channel activity"/>
    <property type="evidence" value="ECO:0007669"/>
    <property type="project" value="UniProtKB-KW"/>
</dbReference>
<dbReference type="GO" id="GO:0071468">
    <property type="term" value="P:cellular response to acidic pH"/>
    <property type="evidence" value="ECO:0007669"/>
    <property type="project" value="Ensembl"/>
</dbReference>
<dbReference type="GO" id="GO:0071456">
    <property type="term" value="P:cellular response to hypoxia"/>
    <property type="evidence" value="ECO:0007669"/>
    <property type="project" value="Ensembl"/>
</dbReference>
<dbReference type="GO" id="GO:0071294">
    <property type="term" value="P:cellular response to zinc ion"/>
    <property type="evidence" value="ECO:0007669"/>
    <property type="project" value="Ensembl"/>
</dbReference>
<dbReference type="GO" id="GO:0090102">
    <property type="term" value="P:cochlea development"/>
    <property type="evidence" value="ECO:0007669"/>
    <property type="project" value="Ensembl"/>
</dbReference>
<dbReference type="GO" id="GO:0003029">
    <property type="term" value="P:detection of hypoxic conditions in blood by carotid body chemoreceptor signaling"/>
    <property type="evidence" value="ECO:0000315"/>
    <property type="project" value="UniProtKB"/>
</dbReference>
<dbReference type="GO" id="GO:0051481">
    <property type="term" value="P:negative regulation of cytosolic calcium ion concentration"/>
    <property type="evidence" value="ECO:0007669"/>
    <property type="project" value="Ensembl"/>
</dbReference>
<dbReference type="GO" id="GO:0099605">
    <property type="term" value="P:regulation of action potential firing rate"/>
    <property type="evidence" value="ECO:0000315"/>
    <property type="project" value="UniProtKB"/>
</dbReference>
<dbReference type="GO" id="GO:0060075">
    <property type="term" value="P:regulation of resting membrane potential"/>
    <property type="evidence" value="ECO:0007669"/>
    <property type="project" value="Ensembl"/>
</dbReference>
<dbReference type="GO" id="GO:0009410">
    <property type="term" value="P:response to xenobiotic stimulus"/>
    <property type="evidence" value="ECO:0007669"/>
    <property type="project" value="Ensembl"/>
</dbReference>
<dbReference type="FunFam" id="1.10.287.70:FF:000057">
    <property type="entry name" value="Potassium channel subfamily K member"/>
    <property type="match status" value="1"/>
</dbReference>
<dbReference type="Gene3D" id="1.10.287.70">
    <property type="match status" value="1"/>
</dbReference>
<dbReference type="InterPro" id="IPR003280">
    <property type="entry name" value="2pore_dom_K_chnl"/>
</dbReference>
<dbReference type="InterPro" id="IPR003092">
    <property type="entry name" value="2pore_dom_K_chnl_TASK"/>
</dbReference>
<dbReference type="InterPro" id="IPR013099">
    <property type="entry name" value="K_chnl_dom"/>
</dbReference>
<dbReference type="InterPro" id="IPR005406">
    <property type="entry name" value="KCNK3"/>
</dbReference>
<dbReference type="PANTHER" id="PTHR11003:SF138">
    <property type="entry name" value="POTASSIUM CHANNEL SUBFAMILY K MEMBER 3"/>
    <property type="match status" value="1"/>
</dbReference>
<dbReference type="PANTHER" id="PTHR11003">
    <property type="entry name" value="POTASSIUM CHANNEL, SUBFAMILY K"/>
    <property type="match status" value="1"/>
</dbReference>
<dbReference type="Pfam" id="PF07885">
    <property type="entry name" value="Ion_trans_2"/>
    <property type="match status" value="2"/>
</dbReference>
<dbReference type="PIRSF" id="PIRSF038061">
    <property type="entry name" value="K_channel_subfamily_K_type"/>
    <property type="match status" value="1"/>
</dbReference>
<dbReference type="PRINTS" id="PR01333">
    <property type="entry name" value="2POREKCHANEL"/>
</dbReference>
<dbReference type="PRINTS" id="PR01584">
    <property type="entry name" value="TASK1CHANNEL"/>
</dbReference>
<dbReference type="PRINTS" id="PR01095">
    <property type="entry name" value="TASKCHANNEL"/>
</dbReference>
<dbReference type="SUPFAM" id="SSF81324">
    <property type="entry name" value="Voltage-gated potassium channels"/>
    <property type="match status" value="2"/>
</dbReference>
<feature type="chain" id="PRO_0000101745" description="Potassium channel subfamily K member 3">
    <location>
        <begin position="1"/>
        <end position="409"/>
    </location>
</feature>
<feature type="topological domain" description="Cytoplasmic" evidence="3">
    <location>
        <begin position="1"/>
        <end position="8"/>
    </location>
</feature>
<feature type="transmembrane region" description="Helical" evidence="3">
    <location>
        <begin position="9"/>
        <end position="29"/>
    </location>
</feature>
<feature type="intramembrane region" description="Pore-forming; Name=Pore-forming 1" evidence="3">
    <location>
        <begin position="78"/>
        <end position="101"/>
    </location>
</feature>
<feature type="transmembrane region" description="Helical" evidence="3">
    <location>
        <begin position="108"/>
        <end position="128"/>
    </location>
</feature>
<feature type="topological domain" description="Cytoplasmic" evidence="3">
    <location>
        <begin position="129"/>
        <end position="158"/>
    </location>
</feature>
<feature type="transmembrane region" description="Helical" evidence="3">
    <location>
        <begin position="159"/>
        <end position="179"/>
    </location>
</feature>
<feature type="intramembrane region" description="Pore-forming; Name=Pore-forming 2" evidence="3">
    <location>
        <begin position="184"/>
        <end position="207"/>
    </location>
</feature>
<feature type="transmembrane region" description="Helical" evidence="3">
    <location>
        <begin position="223"/>
        <end position="243"/>
    </location>
</feature>
<feature type="topological domain" description="Cytoplasmic" evidence="3">
    <location>
        <begin position="244"/>
        <end position="409"/>
    </location>
</feature>
<feature type="site" description="pH sensor" evidence="4">
    <location>
        <position position="98"/>
    </location>
</feature>
<feature type="glycosylation site" description="N-linked (GlcNAc...) asparagine" evidence="3">
    <location>
        <position position="53"/>
    </location>
</feature>
<feature type="mutagenesis site" description="Increases sensitivity to extracellular pH variations. Can bind two protons per molecule similarly to wild-type." evidence="4">
    <original>H</original>
    <variation>N</variation>
    <location>
        <position position="72"/>
    </location>
</feature>
<feature type="mutagenesis site" description="No effect on the sensitivity to extracellular pH variations." evidence="4">
    <original>K</original>
    <variation>N</variation>
    <location>
        <position position="73"/>
    </location>
</feature>
<feature type="mutagenesis site" description="Decreases inhibition of K(+) currents by extracellular acidification. Can bind one proton per molecule." evidence="4">
    <original>H</original>
    <variation>D</variation>
    <location>
        <position position="98"/>
    </location>
</feature>
<feature type="mutagenesis site" description="Decreases inhibition of K(+) currents by extracellular acidification. Can bind one proton per molecule." evidence="4">
    <original>H</original>
    <variation>N</variation>
    <location>
        <position position="98"/>
    </location>
</feature>
<feature type="mutagenesis site" description="Decreases sensitivity to extracellular pH variations. Can bind two protons per molecule similarly to wild-type." evidence="4">
    <original>K</original>
    <variation>N</variation>
    <location>
        <position position="210"/>
    </location>
</feature>
<feature type="sequence conflict" description="In Ref. 3; AAC53367." evidence="14" ref="3">
    <original>Q</original>
    <variation>E</variation>
    <location>
        <position position="4"/>
    </location>
</feature>
<feature type="sequence conflict" description="In Ref. 3; AAC53367." evidence="14" ref="3">
    <original>V</original>
    <variation>I</variation>
    <location>
        <position position="123"/>
    </location>
</feature>
<comment type="function">
    <text evidence="1 2 4 5 6 7 8 9 10 15">K(+) channel that conducts voltage-dependent outward rectifying currents upon membrane depolarization. Voltage sensing is coupled to K(+) electrochemical gradient in an 'ion flux gating' mode where outward but not inward ion flow opens the gate (By similarity) (PubMed:12634929, PubMed:18034154, PubMed:18250325, PubMed:28988768, PubMed:9506712). Changes ion selectivity and becomes permeable to Na(+) ions in response to extracellular acidification. Protonation of the pH sensor His-98 stabilizes C-type inactivation conformation likely converting the channel from outward K(+)-conducting, to inward Na(+)-conducting to nonconductive state. Homo- and heterodimerizes to form functional channels with distinct regulatory and gating properties (By similarity). Allows K(+) currents with fast-gating kinetics important for the repolarization and hyperpolarization phases of action potentials (By similarity) (PubMed:18250325). In cerebellar granule cells, heteromeric KCNK3:KCNK9 channel may hyperpolarize the resting membrane potential to limit intrinsic neuronal excitability, but once the action potential threshold is reached, it may support high-frequency action potential firing and increased neuronal excitability (Probable). Dispensable for central chemosensory respiration i.e. breathing controlled by brainstem CO2/pH, it rather conducts pH-sensitive currents and controls the firing rate of serotonergic raphe neurons involved in potentiation of the respiratory chemoreflex. Additionally, imparts chemosensitivity to type 1 cells in carotid bodies which respond to a decrease in arterial oxygen pressure or an increase in carbon dioxide pressure or pH to initiate adaptive changes in pulmonary ventilation (PubMed:18094244, PubMed:18753386). In adrenal gland, contributes to the maintenance of a hyperpolarized resting membrane potential of aldosterone-producing cells at zona glomerulosa and limits aldosterone release as part of a regulatory mechanism that controls arterial blood pressure and electrolyte homeostasis (PubMed:18034154, PubMed:18250325). In brown adipocytes, mediates K(+) efflux that counteracts norepinephrine-induced membrane depolarization, limits Ca(2+) efflux and downstream cAMP and PKA signaling, ultimately attenuating lipid oxidation and adaptive thermogenesis (PubMed:28988768).</text>
</comment>
<comment type="catalytic activity">
    <reaction evidence="4 9 10">
        <text>K(+)(in) = K(+)(out)</text>
        <dbReference type="Rhea" id="RHEA:29463"/>
        <dbReference type="ChEBI" id="CHEBI:29103"/>
    </reaction>
</comment>
<comment type="catalytic activity">
    <reaction evidence="1">
        <text>Na(+)(in) = Na(+)(out)</text>
        <dbReference type="Rhea" id="RHEA:34963"/>
        <dbReference type="ChEBI" id="CHEBI:29101"/>
    </reaction>
</comment>
<comment type="activity regulation">
    <text evidence="4 10">Activated by halothane and isoflurane. Inhibited by external acidification, diacylglycerol and anandamide. Inactivated by barium.</text>
</comment>
<comment type="subunit">
    <text evidence="1 2">Homodimer. Heterodimer with KCNK1 (By similarity). Heterodimer with KCNK9 (By similarity).</text>
</comment>
<comment type="subcellular location">
    <subcellularLocation>
        <location evidence="1">Cell membrane</location>
        <topology evidence="1">Multi-pass membrane protein</topology>
    </subcellularLocation>
</comment>
<comment type="tissue specificity">
    <text evidence="5 9 10">Very strong expression in heart, also detected in kidney, brain, skin, testis, lung, skeletal muscle, small intestine and stomach. Not detected in liver, thymus or spleen (PubMed:9506712). Expressed in adrenal glands mainly in zona glomerulosa and zona fasciculata of the cortex (PubMed:18034154). Expressed at higher levels in brown and beige than in white adipocytes (PubMed:28988768).</text>
</comment>
<comment type="induction">
    <text evidence="9">Transcriptionally up-regulated in adipose tissue by PRDM16.</text>
</comment>
<comment type="domain">
    <text evidence="1">Each subunit contributes two pore-forming domains 1 and 2 which assemble to form a single pore with M2 and M4 transmembrane helices lining the central cavity and M1 and M3 facing the lipid bilayer. The transmembrane helices are bridged by the selectivity filters 1 and 2 carrying a signature sequence TxTTxG(Y/F)G(D/H) that coordinate the permeant ions. Up to four ions can simultaneously occupy the selectivity filter and at least two elementary charges must translocate across the filter to convert it into the open conformation.</text>
</comment>
<comment type="domain">
    <text evidence="1">The X-gate is positioned at the distal ends of M4 transmembrane helices forming a two-turn-helical structure with the methyl group of Thr-248 closing the ion conduction pathway.</text>
</comment>
<comment type="disruption phenotype">
    <text evidence="5 7">Knockout mice develop primary hyperaldosteronism associated with arterial hypertension. At postnatal day 18, mice of both gender display abnormal adrenal zonation with almost absent zona glomerulosa and mislocalization of aldosterone synthase in the zona fasciculata. This phenotype is rescued in male mice after puberty likely due to androgen-dependent compensatory mechanisms.</text>
</comment>
<comment type="similarity">
    <text evidence="14">Belongs to the two pore domain potassium channel (TC 1.A.1.8) family.</text>
</comment>
<proteinExistence type="evidence at protein level"/>